<reference key="1">
    <citation type="journal article" date="1994" name="Mol. Gen. Genet.">
        <title>Structural and functional characterisation of the signal recognition particle-specific 54 kDa protein (SRP54) of tomato.</title>
        <authorList>
            <person name="Krolkiewicz S."/>
            <person name="Sanger H.L."/>
            <person name="Niesbach-Klosgen U."/>
        </authorList>
    </citation>
    <scope>NUCLEOTIDE SEQUENCE [MRNA]</scope>
    <source>
        <strain>cv. UC82B</strain>
    </source>
</reference>
<organism>
    <name type="scientific">Solanum lycopersicum</name>
    <name type="common">Tomato</name>
    <name type="synonym">Lycopersicon esculentum</name>
    <dbReference type="NCBI Taxonomy" id="4081"/>
    <lineage>
        <taxon>Eukaryota</taxon>
        <taxon>Viridiplantae</taxon>
        <taxon>Streptophyta</taxon>
        <taxon>Embryophyta</taxon>
        <taxon>Tracheophyta</taxon>
        <taxon>Spermatophyta</taxon>
        <taxon>Magnoliopsida</taxon>
        <taxon>eudicotyledons</taxon>
        <taxon>Gunneridae</taxon>
        <taxon>Pentapetalae</taxon>
        <taxon>asterids</taxon>
        <taxon>lamiids</taxon>
        <taxon>Solanales</taxon>
        <taxon>Solanaceae</taxon>
        <taxon>Solanoideae</taxon>
        <taxon>Solaneae</taxon>
        <taxon>Solanum</taxon>
        <taxon>Solanum subgen. Lycopersicon</taxon>
    </lineage>
</organism>
<keyword id="KW-0963">Cytoplasm</keyword>
<keyword id="KW-0256">Endoplasmic reticulum</keyword>
<keyword id="KW-0342">GTP-binding</keyword>
<keyword id="KW-0378">Hydrolase</keyword>
<keyword id="KW-0547">Nucleotide-binding</keyword>
<keyword id="KW-1185">Reference proteome</keyword>
<keyword id="KW-0687">Ribonucleoprotein</keyword>
<keyword id="KW-0694">RNA-binding</keyword>
<keyword id="KW-0733">Signal recognition particle</keyword>
<comment type="function">
    <text evidence="2 3">Component of the signal recognition particle (SRP) complex, a ribonucleoprotein complex that mediates the cotranslational targeting of secretory and membrane proteins to the endoplasmic reticulum (ER). As part of the SRP complex, associates with the SRP receptor (SR) component SRPRA to target secretory proteins to the endoplasmic reticulum membrane. Binds to the signal sequence of presecretory proteins when they emerge from the ribosomes. Displays basal GTPase activity, and stimulates reciprocal GTPase activation of the SR subunit SRPRA. Forms a guanosine 5'-triphosphate (GTP)-dependent complex with the SR subunit SRPRA. SR compaction and GTPase mediated rearrangement of SR drive SRP-mediated cotranslational protein translocation into the ER (By similarity). Requires the presence of SRP9/SRP14 and/or SRP19 to stably interact with RNA (By similarity).</text>
</comment>
<comment type="catalytic activity">
    <reaction evidence="3">
        <text>GTP + H2O = GDP + phosphate + H(+)</text>
        <dbReference type="Rhea" id="RHEA:19669"/>
        <dbReference type="ChEBI" id="CHEBI:15377"/>
        <dbReference type="ChEBI" id="CHEBI:15378"/>
        <dbReference type="ChEBI" id="CHEBI:37565"/>
        <dbReference type="ChEBI" id="CHEBI:43474"/>
        <dbReference type="ChEBI" id="CHEBI:58189"/>
        <dbReference type="EC" id="3.6.5.4"/>
    </reaction>
    <physiologicalReaction direction="left-to-right" evidence="3">
        <dbReference type="Rhea" id="RHEA:19670"/>
    </physiologicalReaction>
</comment>
<comment type="subunit">
    <text evidence="3">Component of a signal recognition particle (SRP) complex that consists of a 7SL RNA molecule of 300 nucleotides and six protein subunits: SRP72, SRP68, SRP54, SRP19, SRP14 and SRP9.</text>
</comment>
<comment type="subcellular location">
    <subcellularLocation>
        <location evidence="3">Cytoplasm</location>
    </subcellularLocation>
    <subcellularLocation>
        <location evidence="3">Endoplasmic reticulum</location>
    </subcellularLocation>
</comment>
<comment type="domain">
    <text evidence="3">The NG domain, also named G domain, is a special guanosine triphosphatase (GTPase) domain, which binds GTP and forms a guanosine 5'-triphosphate (GTP)-dependent complex with a homologous NG domain in the SRP receptor subunit SRPRA. The two NG domains undergo cooperative rearrangements upon their assembly, which culminate in the reciprocal activation of the GTPase activity of one another. SRP receptor compaction upon binding with cargo-loaded SRP and GTPase rearrangement drive SRP-mediated cotranslational protein translocation into the ER.</text>
</comment>
<comment type="domain">
    <text evidence="3">The M domain binds the 7SL RNA in presence of SRP19 and binds the signal sequence of presecretory proteins.</text>
</comment>
<comment type="similarity">
    <text evidence="4">Belongs to the GTP-binding SRP family. SRP54 subfamily.</text>
</comment>
<feature type="chain" id="PRO_0000101211" description="Signal recognition particle subunit SRP54 2">
    <location>
        <begin position="1"/>
        <end position="499"/>
    </location>
</feature>
<feature type="region of interest" description="G-domain">
    <location>
        <begin position="1"/>
        <end position="295"/>
    </location>
</feature>
<feature type="region of interest" description="M-domain">
    <location>
        <begin position="296"/>
        <end position="499"/>
    </location>
</feature>
<feature type="binding site" evidence="1">
    <location>
        <begin position="108"/>
        <end position="115"/>
    </location>
    <ligand>
        <name>GTP</name>
        <dbReference type="ChEBI" id="CHEBI:37565"/>
    </ligand>
</feature>
<feature type="binding site" evidence="1">
    <location>
        <begin position="190"/>
        <end position="194"/>
    </location>
    <ligand>
        <name>GTP</name>
        <dbReference type="ChEBI" id="CHEBI:37565"/>
    </ligand>
</feature>
<feature type="binding site" evidence="1">
    <location>
        <begin position="248"/>
        <end position="251"/>
    </location>
    <ligand>
        <name>GTP</name>
        <dbReference type="ChEBI" id="CHEBI:37565"/>
    </ligand>
</feature>
<sequence>MVLAELGGSISRALQQMSNATIIDEKVLNECLNEITRALLQADVQFKLVRDMTTNIKKIVNLDDLAAGHNKRRIIQQAVFNELCKILDPGKPSFTPKKGKPSIVMFVGLQGSGKTTTCTKYAYYHQKKGWKPALVCADTFRAGAFDQLKQNATKAKIPFYGSYTESDPVKIAVDGVETFKKENCDLIIVDTSGRHKQEAALFEEMRQVAEATKPDLVIFVMDSSIGQAAFDQAQAFKQSVAVGAVIVTKMDGHAKGGGALSAVAATKSPVIFIGTGEHMDEFEVFDVKPFVSRLLGMGDWSGFMDKIHEVVPMDQQPELLQKLSEGHFTLRIMYEQFQNILKMGPIGQVFSMLPGFSAELMPKGRENESQAKIKRYMTMMDSMTNEELDSSNPKLMTDSRIMRIARGSGRQVHEVMDMMEEYKRLAKIWSKMKGLKIPKKGEMSALSRNMNAQHMSKVLPPQMLKQIGGMGGLQNLMKQMGSAKDMMGGMGGMFGGGDK</sequence>
<accession>P49972</accession>
<name>SR542_SOLLC</name>
<proteinExistence type="evidence at transcript level"/>
<protein>
    <recommendedName>
        <fullName>Signal recognition particle subunit SRP54 2</fullName>
        <ecNumber evidence="3">3.6.5.4</ecNumber>
    </recommendedName>
    <alternativeName>
        <fullName>Signal recognition particle 54 kDa protein 2</fullName>
        <shortName>SRP54</shortName>
    </alternativeName>
</protein>
<dbReference type="EC" id="3.6.5.4" evidence="3"/>
<dbReference type="EMBL" id="Z34527">
    <property type="protein sequence ID" value="CAA84288.1"/>
    <property type="molecule type" value="mRNA"/>
</dbReference>
<dbReference type="PIR" id="S51598">
    <property type="entry name" value="S51598"/>
</dbReference>
<dbReference type="RefSeq" id="NP_001234428.1">
    <property type="nucleotide sequence ID" value="NM_001247499.2"/>
</dbReference>
<dbReference type="SMR" id="P49972"/>
<dbReference type="FunCoup" id="P49972">
    <property type="interactions" value="3689"/>
</dbReference>
<dbReference type="STRING" id="4081.P49972"/>
<dbReference type="PaxDb" id="4081-Solyc12g042740.1.1"/>
<dbReference type="EnsemblPlants" id="Solyc12g042740.2.1">
    <property type="protein sequence ID" value="Solyc12g042740.2.1"/>
    <property type="gene ID" value="Solyc12g042740.2"/>
</dbReference>
<dbReference type="GeneID" id="544156"/>
<dbReference type="Gramene" id="Solyc12g042740.2.1">
    <property type="protein sequence ID" value="Solyc12g042740.2.1"/>
    <property type="gene ID" value="Solyc12g042740.2"/>
</dbReference>
<dbReference type="KEGG" id="sly:544156"/>
<dbReference type="eggNOG" id="KOG0780">
    <property type="taxonomic scope" value="Eukaryota"/>
</dbReference>
<dbReference type="HOGENOM" id="CLU_009301_6_1_1"/>
<dbReference type="InParanoid" id="P49972"/>
<dbReference type="OMA" id="MTIFVMD"/>
<dbReference type="OrthoDB" id="10250817at2759"/>
<dbReference type="PhylomeDB" id="P49972"/>
<dbReference type="Proteomes" id="UP000004994">
    <property type="component" value="Chromosome 12"/>
</dbReference>
<dbReference type="ExpressionAtlas" id="P49972">
    <property type="expression patterns" value="baseline and differential"/>
</dbReference>
<dbReference type="GO" id="GO:0005829">
    <property type="term" value="C:cytosol"/>
    <property type="evidence" value="ECO:0000318"/>
    <property type="project" value="GO_Central"/>
</dbReference>
<dbReference type="GO" id="GO:0005783">
    <property type="term" value="C:endoplasmic reticulum"/>
    <property type="evidence" value="ECO:0007669"/>
    <property type="project" value="UniProtKB-SubCell"/>
</dbReference>
<dbReference type="GO" id="GO:0005786">
    <property type="term" value="C:signal recognition particle, endoplasmic reticulum targeting"/>
    <property type="evidence" value="ECO:0000318"/>
    <property type="project" value="GO_Central"/>
</dbReference>
<dbReference type="GO" id="GO:0008312">
    <property type="term" value="F:7S RNA binding"/>
    <property type="evidence" value="ECO:0000318"/>
    <property type="project" value="GO_Central"/>
</dbReference>
<dbReference type="GO" id="GO:0016887">
    <property type="term" value="F:ATP hydrolysis activity"/>
    <property type="evidence" value="ECO:0007669"/>
    <property type="project" value="InterPro"/>
</dbReference>
<dbReference type="GO" id="GO:0030942">
    <property type="term" value="F:endoplasmic reticulum signal peptide binding"/>
    <property type="evidence" value="ECO:0000318"/>
    <property type="project" value="GO_Central"/>
</dbReference>
<dbReference type="GO" id="GO:0005525">
    <property type="term" value="F:GTP binding"/>
    <property type="evidence" value="ECO:0007669"/>
    <property type="project" value="UniProtKB-KW"/>
</dbReference>
<dbReference type="GO" id="GO:0003924">
    <property type="term" value="F:GTPase activity"/>
    <property type="evidence" value="ECO:0007669"/>
    <property type="project" value="InterPro"/>
</dbReference>
<dbReference type="GO" id="GO:0006616">
    <property type="term" value="P:SRP-dependent cotranslational protein targeting to membrane, translocation"/>
    <property type="evidence" value="ECO:0000318"/>
    <property type="project" value="GO_Central"/>
</dbReference>
<dbReference type="CDD" id="cd17875">
    <property type="entry name" value="SRP54_G"/>
    <property type="match status" value="1"/>
</dbReference>
<dbReference type="FunFam" id="1.10.260.30:FF:000004">
    <property type="entry name" value="Signal recognition particle 54 kDa protein"/>
    <property type="match status" value="1"/>
</dbReference>
<dbReference type="FunFam" id="3.40.50.300:FF:000022">
    <property type="entry name" value="Signal recognition particle 54 kDa subunit"/>
    <property type="match status" value="1"/>
</dbReference>
<dbReference type="FunFam" id="1.20.120.140:FF:000001">
    <property type="entry name" value="Signal recognition particle GTPase"/>
    <property type="match status" value="1"/>
</dbReference>
<dbReference type="Gene3D" id="3.40.50.300">
    <property type="entry name" value="P-loop containing nucleotide triphosphate hydrolases"/>
    <property type="match status" value="1"/>
</dbReference>
<dbReference type="Gene3D" id="1.20.120.140">
    <property type="entry name" value="Signal recognition particle SRP54, nucleotide-binding domain"/>
    <property type="match status" value="1"/>
</dbReference>
<dbReference type="Gene3D" id="1.10.260.30">
    <property type="entry name" value="Signal recognition particle, SRP54 subunit, M-domain"/>
    <property type="match status" value="1"/>
</dbReference>
<dbReference type="HAMAP" id="MF_00306">
    <property type="entry name" value="SRP54"/>
    <property type="match status" value="1"/>
</dbReference>
<dbReference type="InterPro" id="IPR003593">
    <property type="entry name" value="AAA+_ATPase"/>
</dbReference>
<dbReference type="InterPro" id="IPR027417">
    <property type="entry name" value="P-loop_NTPase"/>
</dbReference>
<dbReference type="InterPro" id="IPR036891">
    <property type="entry name" value="Signal_recog_part_SRP54_M_sf"/>
</dbReference>
<dbReference type="InterPro" id="IPR013822">
    <property type="entry name" value="Signal_recog_particl_SRP54_hlx"/>
</dbReference>
<dbReference type="InterPro" id="IPR004125">
    <property type="entry name" value="Signal_recog_particle_SRP54_M"/>
</dbReference>
<dbReference type="InterPro" id="IPR036225">
    <property type="entry name" value="SRP/SRP_N"/>
</dbReference>
<dbReference type="InterPro" id="IPR022941">
    <property type="entry name" value="SRP54"/>
</dbReference>
<dbReference type="InterPro" id="IPR006325">
    <property type="entry name" value="SRP54_euk"/>
</dbReference>
<dbReference type="InterPro" id="IPR000897">
    <property type="entry name" value="SRP54_GTPase_dom"/>
</dbReference>
<dbReference type="InterPro" id="IPR042101">
    <property type="entry name" value="SRP54_N_sf"/>
</dbReference>
<dbReference type="NCBIfam" id="TIGR01425">
    <property type="entry name" value="SRP54_euk"/>
    <property type="match status" value="1"/>
</dbReference>
<dbReference type="PANTHER" id="PTHR11564">
    <property type="entry name" value="SIGNAL RECOGNITION PARTICLE 54K PROTEIN SRP54"/>
    <property type="match status" value="1"/>
</dbReference>
<dbReference type="PANTHER" id="PTHR11564:SF5">
    <property type="entry name" value="SIGNAL RECOGNITION PARTICLE SUBUNIT SRP54"/>
    <property type="match status" value="1"/>
</dbReference>
<dbReference type="Pfam" id="PF00448">
    <property type="entry name" value="SRP54"/>
    <property type="match status" value="1"/>
</dbReference>
<dbReference type="Pfam" id="PF02881">
    <property type="entry name" value="SRP54_N"/>
    <property type="match status" value="1"/>
</dbReference>
<dbReference type="Pfam" id="PF02978">
    <property type="entry name" value="SRP_SPB"/>
    <property type="match status" value="1"/>
</dbReference>
<dbReference type="SMART" id="SM00382">
    <property type="entry name" value="AAA"/>
    <property type="match status" value="1"/>
</dbReference>
<dbReference type="SMART" id="SM00962">
    <property type="entry name" value="SRP54"/>
    <property type="match status" value="1"/>
</dbReference>
<dbReference type="SMART" id="SM00963">
    <property type="entry name" value="SRP54_N"/>
    <property type="match status" value="1"/>
</dbReference>
<dbReference type="SUPFAM" id="SSF47364">
    <property type="entry name" value="Domain of the SRP/SRP receptor G-proteins"/>
    <property type="match status" value="1"/>
</dbReference>
<dbReference type="SUPFAM" id="SSF52540">
    <property type="entry name" value="P-loop containing nucleoside triphosphate hydrolases"/>
    <property type="match status" value="1"/>
</dbReference>
<dbReference type="SUPFAM" id="SSF47446">
    <property type="entry name" value="Signal peptide-binding domain"/>
    <property type="match status" value="1"/>
</dbReference>
<dbReference type="PROSITE" id="PS00300">
    <property type="entry name" value="SRP54"/>
    <property type="match status" value="1"/>
</dbReference>
<evidence type="ECO:0000250" key="1"/>
<evidence type="ECO:0000250" key="2">
    <source>
        <dbReference type="UniProtKB" id="P61010"/>
    </source>
</evidence>
<evidence type="ECO:0000250" key="3">
    <source>
        <dbReference type="UniProtKB" id="P61011"/>
    </source>
</evidence>
<evidence type="ECO:0000305" key="4"/>